<dbReference type="EC" id="1.4.1.16"/>
<dbReference type="EMBL" id="AB030649">
    <property type="protein sequence ID" value="BAB07799.1"/>
    <property type="molecule type" value="Genomic_DNA"/>
</dbReference>
<dbReference type="SMR" id="Q9KWR0"/>
<dbReference type="STRING" id="1421.A2J09_08005"/>
<dbReference type="KEGG" id="ag:BAB07799"/>
<dbReference type="BioCyc" id="MetaCyc:MONOMER-6607"/>
<dbReference type="UniPathway" id="UPA00034">
    <property type="reaction ID" value="UER00026"/>
</dbReference>
<dbReference type="GO" id="GO:0047850">
    <property type="term" value="F:diaminopimelate dehydrogenase activity"/>
    <property type="evidence" value="ECO:0007669"/>
    <property type="project" value="UniProtKB-EC"/>
</dbReference>
<dbReference type="GO" id="GO:0019877">
    <property type="term" value="P:diaminopimelate biosynthetic process"/>
    <property type="evidence" value="ECO:0007669"/>
    <property type="project" value="UniProtKB-KW"/>
</dbReference>
<dbReference type="GO" id="GO:0009089">
    <property type="term" value="P:lysine biosynthetic process via diaminopimelate"/>
    <property type="evidence" value="ECO:0007669"/>
    <property type="project" value="UniProtKB-UniPathway"/>
</dbReference>
<dbReference type="CDD" id="cd02270">
    <property type="entry name" value="meso-DAPDH_N"/>
    <property type="match status" value="1"/>
</dbReference>
<dbReference type="Gene3D" id="3.30.360.10">
    <property type="entry name" value="Dihydrodipicolinate Reductase, domain 2"/>
    <property type="match status" value="1"/>
</dbReference>
<dbReference type="Gene3D" id="3.40.50.720">
    <property type="entry name" value="NAD(P)-binding Rossmann-like Domain"/>
    <property type="match status" value="1"/>
</dbReference>
<dbReference type="InterPro" id="IPR010190">
    <property type="entry name" value="Diaminopimelate_DH_Ddh"/>
</dbReference>
<dbReference type="InterPro" id="IPR032094">
    <property type="entry name" value="Meso-DAP_DH_C"/>
</dbReference>
<dbReference type="InterPro" id="IPR036291">
    <property type="entry name" value="NAD(P)-bd_dom_sf"/>
</dbReference>
<dbReference type="NCBIfam" id="TIGR01921">
    <property type="entry name" value="DAP-DH"/>
    <property type="match status" value="1"/>
</dbReference>
<dbReference type="Pfam" id="PF16654">
    <property type="entry name" value="DAPDH_C"/>
    <property type="match status" value="1"/>
</dbReference>
<dbReference type="PIRSF" id="PIRSF025648">
    <property type="entry name" value="DDH"/>
    <property type="match status" value="1"/>
</dbReference>
<dbReference type="SUPFAM" id="SSF55347">
    <property type="entry name" value="Glyceraldehyde-3-phosphate dehydrogenase-like, C-terminal domain"/>
    <property type="match status" value="1"/>
</dbReference>
<dbReference type="SUPFAM" id="SSF51735">
    <property type="entry name" value="NAD(P)-binding Rossmann-fold domains"/>
    <property type="match status" value="1"/>
</dbReference>
<proteinExistence type="evidence at protein level"/>
<gene>
    <name type="primary">dapdh</name>
</gene>
<name>DAPDH_LYSSH</name>
<comment type="function">
    <text evidence="2 3">Catalyzes the reversible NADPH-dependent reductive amination of L-2-amino-6-oxopimelate, the acyclic form of L-tetrahydrodipicolinate, to generate the meso compound, D,L-2,6-diaminopimelate. Probably plays a role in lysine biosynthesis. Exhibits a high substrate specificity, since alpha-ketoglutarate, pyruvate, oxaloacetate, glyoxylate, alpha-ketobutyrate, alpha-ketovalerate, alpha-ketocaproate, alpha-ketoisocaproate, alpha-ketoisovalerate, and phenylpyruvate are not substrates for the reductive amination reaction, and L,L-2,6-diaminopimelate, D,D-2,6-diaminopimelate, DL-alpha-aminopimelate, meso- and DL-2,5-diaminoadipate, L-djenkolate, L-cystine, L-lysine, S-(beta-aminoethy1)-L-homocysteine, L-ornithine, L-arginine, L-alpha,gamma-diaminobutyrate, L-histidine, L-phenylalanine, L-tyrosine, L-glutamate, L-aspartate, L-leucine, L-valine, L-methionine, L-serine, L-alanine, L-alpha-aminobutyrate, D-lysine, D-glutamate, D-leucine, D-alanine, D-phenylalanine, epsilon-aminocaproate, 7-aminoheptanoate, and 8-aminooctanoate are not substrates for the oxidative deamination reaction. Cannot use NAD(+) or NAD(+) analogs instead of NADP(+) for the oxidative deamination reaction.</text>
</comment>
<comment type="catalytic activity">
    <reaction evidence="2 3">
        <text>meso-2,6-diaminopimelate + NADP(+) + H2O = (S)-2-amino-6-oxoheptanedioate + NH4(+) + NADPH + H(+)</text>
        <dbReference type="Rhea" id="RHEA:13561"/>
        <dbReference type="ChEBI" id="CHEBI:15377"/>
        <dbReference type="ChEBI" id="CHEBI:15378"/>
        <dbReference type="ChEBI" id="CHEBI:28938"/>
        <dbReference type="ChEBI" id="CHEBI:57783"/>
        <dbReference type="ChEBI" id="CHEBI:57791"/>
        <dbReference type="ChEBI" id="CHEBI:58349"/>
        <dbReference type="ChEBI" id="CHEBI:58556"/>
        <dbReference type="EC" id="1.4.1.16"/>
    </reaction>
</comment>
<comment type="activity regulation">
    <text evidence="2 4">L,L-2,6-diaminopimelate, D,D-2,6-diaminopimelate and meso-2,5-diaminoadipate competitively inhibit the oxidation of meso-2,6-diaminopimelate. L-2-amino-6-methylene-pimelate is also a potent competitive inhibitor (5 uM) of this reaction. Glyoxylate inhibits the reductive amination of L-2-amino-6-oxopimelate about 30%. The enzyme is inhibited completely by p-chloromercuribenzoate and HgCl(2) in vitro.</text>
</comment>
<comment type="biophysicochemical properties">
    <kinetics>
        <KM evidence="2">2.5 mM for meso-2,6-diaminoheptanedioate</KM>
        <KM evidence="2">83 uM for NADP(+)</KM>
        <KM evidence="2">0.2 mM for NADPH</KM>
        <KM evidence="2">0.24 mM for L-2-amino-6-oxoheptanedioate</KM>
        <KM evidence="2">12.5 mM for ammonia</KM>
        <text>The rate of the reductive amination reaction is about 11 times higher than that of the oxidative deamination at pH 7.5.</text>
    </kinetics>
    <phDependence>
        <text evidence="2">Optimum pH is about 10.5 for the oxidative deamination of meso-diaminopimelate and 7.5 for the reductive amination of L-2-amino-6-oxopimelate. The rate of the amination reaction declines markedly above pH 9.0.</text>
    </phDependence>
</comment>
<comment type="pathway">
    <text>Amino-acid biosynthesis; L-lysine biosynthesis via DAP pathway; DL-2,6-diaminopimelate from (S)-tetrahydrodipicolinate: step 1/1.</text>
</comment>
<comment type="subunit">
    <text evidence="2">Homodimer.</text>
</comment>
<comment type="induction">
    <text evidence="3">Constitutively expressed. Not induced by meso-2,6-diaminopimelate.</text>
</comment>
<comment type="miscellaneous">
    <text>The reductive amination proceeds through a sequential ordered ternary-binary mechanism. NADPH binds first to the enzyme followed by L-2-amino-6-ketopimelate and ammonia, and the products are released in the order of meso-2,6-diaminopimelate and NADP(+). Moreover, the enzyme is B-stereospecific: the pro-S hydrogen at C-4 of the dihydronicotinamide ring of NADPH is transferred to the substrate.</text>
</comment>
<comment type="similarity">
    <text evidence="5">Belongs to the diaminopimelate dehydrogenase family.</text>
</comment>
<feature type="initiator methionine" description="Removed" evidence="5">
    <location>
        <position position="1"/>
    </location>
</feature>
<feature type="chain" id="PRO_5000049425" description="Meso-diaminopimelate D-dehydrogenase">
    <location>
        <begin position="2"/>
        <end position="326"/>
    </location>
</feature>
<feature type="binding site" evidence="1">
    <location>
        <begin position="11"/>
        <end position="14"/>
    </location>
    <ligand>
        <name>NADP(+)</name>
        <dbReference type="ChEBI" id="CHEBI:58349"/>
    </ligand>
</feature>
<feature type="binding site" evidence="1">
    <location>
        <begin position="35"/>
        <end position="37"/>
    </location>
    <ligand>
        <name>NADP(+)</name>
        <dbReference type="ChEBI" id="CHEBI:58349"/>
    </ligand>
</feature>
<feature type="binding site" evidence="1">
    <location>
        <begin position="69"/>
        <end position="72"/>
    </location>
    <ligand>
        <name>NADP(+)</name>
        <dbReference type="ChEBI" id="CHEBI:58349"/>
    </ligand>
</feature>
<feature type="binding site" evidence="1">
    <location>
        <begin position="92"/>
        <end position="94"/>
    </location>
    <ligand>
        <name>NADP(+)</name>
        <dbReference type="ChEBI" id="CHEBI:58349"/>
    </ligand>
</feature>
<feature type="binding site" evidence="1">
    <location>
        <position position="94"/>
    </location>
    <ligand>
        <name>substrate</name>
    </ligand>
</feature>
<feature type="binding site" evidence="1">
    <location>
        <begin position="121"/>
        <end position="125"/>
    </location>
    <ligand>
        <name>NADP(+)</name>
        <dbReference type="ChEBI" id="CHEBI:58349"/>
    </ligand>
</feature>
<feature type="binding site" evidence="1">
    <location>
        <position position="124"/>
    </location>
    <ligand>
        <name>substrate</name>
    </ligand>
</feature>
<feature type="binding site" evidence="1">
    <location>
        <position position="148"/>
    </location>
    <ligand>
        <name>substrate</name>
    </ligand>
</feature>
<feature type="binding site" evidence="1">
    <location>
        <begin position="154"/>
        <end position="155"/>
    </location>
    <ligand>
        <name>substrate</name>
    </ligand>
</feature>
<feature type="binding site" evidence="1">
    <location>
        <position position="173"/>
    </location>
    <ligand>
        <name>substrate</name>
    </ligand>
</feature>
<feature type="binding site" evidence="1">
    <location>
        <position position="199"/>
    </location>
    <ligand>
        <name>substrate</name>
    </ligand>
</feature>
<feature type="binding site" evidence="1">
    <location>
        <position position="249"/>
    </location>
    <ligand>
        <name>substrate</name>
    </ligand>
</feature>
<feature type="binding site" evidence="1">
    <location>
        <position position="276"/>
    </location>
    <ligand>
        <name>substrate</name>
    </ligand>
</feature>
<protein>
    <recommendedName>
        <fullName>Meso-diaminopimelate D-dehydrogenase</fullName>
        <shortName>DAPDH</shortName>
        <shortName>Meso-DAP dehydrogenase</shortName>
        <ecNumber>1.4.1.16</ecNumber>
    </recommendedName>
    <alternativeName>
        <fullName>Meso-alpha,epsilon-diaminopimelate D-dehydrogenase</fullName>
    </alternativeName>
</protein>
<reference key="1">
    <citation type="submission" date="1999-07" db="EMBL/GenBank/DDBJ databases">
        <title>Cloning, sequencing, and expression of meso-diaminopimelate dehydrogenase gene from Bacillus sphaericus.</title>
        <authorList>
            <person name="Sakamoto S."/>
            <person name="Seki M."/>
            <person name="Nagata S."/>
            <person name="Misono H."/>
        </authorList>
    </citation>
    <scope>NUCLEOTIDE SEQUENCE [GENOMIC DNA]</scope>
    <source>
        <strain>ATCC 10208 / DSM 5019 / NBRC 3525 / NCIMB 11935 / NRS 966 / 1911</strain>
    </source>
</reference>
<reference key="2">
    <citation type="journal article" date="1979" name="J. Bacteriol.">
        <title>Meso-alpha,epsilon-diaminopimelate D-dehydrogenase: distribution and the reaction product.</title>
        <authorList>
            <person name="Misono H."/>
            <person name="Togawa H."/>
            <person name="Yamamoto T."/>
            <person name="Soda K."/>
        </authorList>
    </citation>
    <scope>FUNCTION</scope>
    <scope>CATALYTIC ACTIVITY</scope>
    <scope>INDUCTION</scope>
    <source>
        <strain>ATCC 10208 / DSM 5019 / NBRC 3525 / NCIMB 11935 / NRS 966 / 1911</strain>
    </source>
</reference>
<reference key="3">
    <citation type="journal article" date="1980" name="J. Biol. Chem.">
        <title>Properties of meso-alpha,epsilon-diaminopimelate D-dehydrogenase from Bacillus sphaericus.</title>
        <authorList>
            <person name="Misono H."/>
            <person name="Soda K."/>
        </authorList>
    </citation>
    <scope>FUNCTION</scope>
    <scope>CATALYTIC ACTIVITY</scope>
    <scope>SUBSTRATE SPECIFICITY</scope>
    <scope>BIOPHYSICOCHEMICAL PROPERTIES</scope>
    <scope>ACTIVITY REGULATION</scope>
    <scope>STEREOSPECIFICITY OF THE REACTION</scope>
    <scope>SUBUNIT</scope>
    <scope>REACTION MECHANISM</scope>
    <source>
        <strain>ATCC 10208 / DSM 5019 / NBRC 3525 / NCIMB 11935 / NRS 966 / 1911</strain>
    </source>
</reference>
<reference key="4">
    <citation type="journal article" date="1999" name="Chem. Commun. (Camb.)">
        <title>Unsaturated alpha-aminopimelic acids as potent inhibitors of meso-diaminopimelic acid (DAP) D-dehydrogenase.</title>
        <authorList>
            <person name="Sutherland A."/>
            <person name="Caplan J.F."/>
            <person name="Vederas J.C."/>
        </authorList>
    </citation>
    <scope>ACTIVITY REGULATION</scope>
    <source>
        <strain>ATCC 10208 / DSM 5019 / NBRC 3525 / NCIMB 11935 / NRS 966 / 1911</strain>
    </source>
</reference>
<organism>
    <name type="scientific">Lysinibacillus sphaericus</name>
    <name type="common">Bacillus sphaericus</name>
    <dbReference type="NCBI Taxonomy" id="1421"/>
    <lineage>
        <taxon>Bacteria</taxon>
        <taxon>Bacillati</taxon>
        <taxon>Bacillota</taxon>
        <taxon>Bacilli</taxon>
        <taxon>Bacillales</taxon>
        <taxon>Bacillaceae</taxon>
        <taxon>Lysinibacillus</taxon>
    </lineage>
</organism>
<evidence type="ECO:0000250" key="1"/>
<evidence type="ECO:0000269" key="2">
    <source>
    </source>
</evidence>
<evidence type="ECO:0000269" key="3">
    <source>
    </source>
</evidence>
<evidence type="ECO:0000269" key="4">
    <source ref="4"/>
</evidence>
<evidence type="ECO:0000305" key="5"/>
<accession>Q9KWR0</accession>
<sequence>MSAIRVGIVGYGNLGRGVEFAISQNPDMELVAVFTRRDPSTVSVASNASVYLVDDAEKFQDDIDVMILCGGSATDLPEQGPHFAQWFNTIDSFDTHAKIPEFFDAVDAAAQKSGKVSVISVGWDPGLFSLNRVLGEAVLPVGTTYTFWGDGLSQGHSDAVRRIEGVKNAVQYTLPIKDAVERVRNGENPELTTREKHARECWVVLEEGADAPKVEQEIVTMPNYFDEYNTTVNFISEDEFNANHTGMPHGGFVIRSGESGANDKQILEFSLKLESNPNFTSSVLVAYARAAHRLSQAGEKGAKTVFDIPFGLLSPKSAAQLRKELL</sequence>
<keyword id="KW-0028">Amino-acid biosynthesis</keyword>
<keyword id="KW-0220">Diaminopimelate biosynthesis</keyword>
<keyword id="KW-0457">Lysine biosynthesis</keyword>
<keyword id="KW-0521">NADP</keyword>
<keyword id="KW-0560">Oxidoreductase</keyword>